<sequence>MIKHYDVVIAGGGVIGASCAYQLSKRKDLKVALIDAKRPGNASRASAGGLWAIGESVGLGCGVIFFRMMSANRKREAQGSAVVVDSSTPHILPQSFFDFALQSNELYPRLHRELMGLHNMDFKFEQTGLKFVIYDEEDRLYAEHIVGCIPHLSDQVRWLDQAALRASEPNVSHEAQGALEFLCDHQVNPFRLTDAYTEGARQNGVDVYFNTNVTGVLHQGNRVSGVKTDVAGLFRCTTLINAAGAWAAELSLQATGIEIPVKPVKGQILLTERMPKLLNGCLTTSDCYMAQKDNGEILIGSTTEDKGFDVTTTYPEINGLVQGAVRCVPELAHVNLKRCWAGLRPGSPDELPILGPMDGVEGYLNACGHFRTGILTSAITGVLLDKLVNEEALPLDITPFLARRFATAPVKKQPEPA</sequence>
<accession>O85228</accession>
<evidence type="ECO:0000250" key="1">
    <source>
        <dbReference type="UniProtKB" id="G3XD67"/>
    </source>
</evidence>
<evidence type="ECO:0000255" key="2"/>
<evidence type="ECO:0000255" key="3">
    <source>
        <dbReference type="PROSITE-ProRule" id="PRU00303"/>
    </source>
</evidence>
<evidence type="ECO:0000269" key="4">
    <source>
    </source>
</evidence>
<evidence type="ECO:0000269" key="5">
    <source>
    </source>
</evidence>
<evidence type="ECO:0000269" key="6">
    <source>
    </source>
</evidence>
<evidence type="ECO:0000303" key="7">
    <source>
    </source>
</evidence>
<evidence type="ECO:0000305" key="8"/>
<evidence type="ECO:0000312" key="9">
    <source>
        <dbReference type="EMBL" id="AAC38596.1"/>
    </source>
</evidence>
<feature type="signal peptide" evidence="3">
    <location>
        <begin position="1"/>
        <end position="18"/>
    </location>
</feature>
<feature type="chain" id="PRO_0000419808" description="Hydrogen cyanide synthase subunit HcnC" evidence="3 6">
    <location>
        <begin position="19"/>
        <end position="417"/>
    </location>
</feature>
<feature type="transmembrane region" description="Helical" evidence="2">
    <location>
        <begin position="46"/>
        <end position="66"/>
    </location>
</feature>
<feature type="binding site" evidence="2">
    <location>
        <begin position="7"/>
        <end position="21"/>
    </location>
    <ligand>
        <name>FAD</name>
        <dbReference type="ChEBI" id="CHEBI:57692"/>
    </ligand>
</feature>
<feature type="lipid moiety-binding region" description="N-palmitoyl cysteine" evidence="3">
    <location>
        <position position="19"/>
    </location>
</feature>
<feature type="lipid moiety-binding region" description="S-diacylglycerol cysteine" evidence="3">
    <location>
        <position position="19"/>
    </location>
</feature>
<name>HCNC_PSEPH</name>
<dbReference type="EC" id="1.4.99.5" evidence="1"/>
<dbReference type="EMBL" id="AF053760">
    <property type="protein sequence ID" value="AAC38596.1"/>
    <property type="molecule type" value="Genomic_DNA"/>
</dbReference>
<dbReference type="RefSeq" id="WP_015635308.1">
    <property type="nucleotide sequence ID" value="NZ_LS999205.1"/>
</dbReference>
<dbReference type="SMR" id="O85228"/>
<dbReference type="GeneID" id="57475635"/>
<dbReference type="PATRIC" id="fig|1124983.3.peg.2666"/>
<dbReference type="eggNOG" id="COG0665">
    <property type="taxonomic scope" value="Bacteria"/>
</dbReference>
<dbReference type="BioCyc" id="MetaCyc:MONOMER-8125"/>
<dbReference type="GO" id="GO:0005737">
    <property type="term" value="C:cytoplasm"/>
    <property type="evidence" value="ECO:0007669"/>
    <property type="project" value="TreeGrafter"/>
</dbReference>
<dbReference type="GO" id="GO:0005886">
    <property type="term" value="C:plasma membrane"/>
    <property type="evidence" value="ECO:0007669"/>
    <property type="project" value="UniProtKB-SubCell"/>
</dbReference>
<dbReference type="GO" id="GO:0050622">
    <property type="term" value="F:glycine dehydrogenase (cyanide-forming) activity"/>
    <property type="evidence" value="ECO:0007669"/>
    <property type="project" value="UniProtKB-EC"/>
</dbReference>
<dbReference type="Gene3D" id="3.30.9.10">
    <property type="entry name" value="D-Amino Acid Oxidase, subunit A, domain 2"/>
    <property type="match status" value="1"/>
</dbReference>
<dbReference type="Gene3D" id="3.50.50.60">
    <property type="entry name" value="FAD/NAD(P)-binding domain"/>
    <property type="match status" value="1"/>
</dbReference>
<dbReference type="InterPro" id="IPR006076">
    <property type="entry name" value="FAD-dep_OxRdtase"/>
</dbReference>
<dbReference type="InterPro" id="IPR036188">
    <property type="entry name" value="FAD/NAD-bd_sf"/>
</dbReference>
<dbReference type="PANTHER" id="PTHR13847:SF289">
    <property type="entry name" value="GLYCINE OXIDASE"/>
    <property type="match status" value="1"/>
</dbReference>
<dbReference type="PANTHER" id="PTHR13847">
    <property type="entry name" value="SARCOSINE DEHYDROGENASE-RELATED"/>
    <property type="match status" value="1"/>
</dbReference>
<dbReference type="Pfam" id="PF01266">
    <property type="entry name" value="DAO"/>
    <property type="match status" value="1"/>
</dbReference>
<dbReference type="SUPFAM" id="SSF54373">
    <property type="entry name" value="FAD-linked reductases, C-terminal domain"/>
    <property type="match status" value="1"/>
</dbReference>
<dbReference type="SUPFAM" id="SSF51905">
    <property type="entry name" value="FAD/NAD(P)-binding domain"/>
    <property type="match status" value="1"/>
</dbReference>
<dbReference type="PROSITE" id="PS51257">
    <property type="entry name" value="PROKAR_LIPOPROTEIN"/>
    <property type="match status" value="1"/>
</dbReference>
<gene>
    <name evidence="9" type="primary">hcnC</name>
</gene>
<proteinExistence type="evidence at transcript level"/>
<organism>
    <name type="scientific">Pseudomonas protegens (strain DSM 19095 / LMG 27888 / CFBP 6595 / CHA0)</name>
    <dbReference type="NCBI Taxonomy" id="1124983"/>
    <lineage>
        <taxon>Bacteria</taxon>
        <taxon>Pseudomonadati</taxon>
        <taxon>Pseudomonadota</taxon>
        <taxon>Gammaproteobacteria</taxon>
        <taxon>Pseudomonadales</taxon>
        <taxon>Pseudomonadaceae</taxon>
        <taxon>Pseudomonas</taxon>
    </lineage>
</organism>
<protein>
    <recommendedName>
        <fullName evidence="9">Hydrogen cyanide synthase subunit HcnC</fullName>
        <shortName evidence="7">HcnC</shortName>
        <ecNumber evidence="1">1.4.99.5</ecNumber>
    </recommendedName>
    <alternativeName>
        <fullName evidence="7">Glycine dehydrogenase (cyanide-forming)</fullName>
    </alternativeName>
</protein>
<reference evidence="8 9" key="1">
    <citation type="journal article" date="1998" name="J. Bacteriol.">
        <title>Characterization of the hcnABC gene cluster encoding hydrogen cyanide synthase and anaerobic regulation by ANR in the strictly aerobic biocontrol agent Pseudomonas fluorescens CHA0.</title>
        <authorList>
            <person name="Laville J."/>
            <person name="Blumer C."/>
            <person name="Von Schroetter C."/>
            <person name="Gaia V."/>
            <person name="Defago G."/>
            <person name="Keel C."/>
            <person name="Haas D."/>
        </authorList>
    </citation>
    <scope>NUCLEOTIDE SEQUENCE [GENOMIC DNA]</scope>
    <scope>FUNCTION</scope>
    <source>
        <strain>DSM 19095 / LMG 27888 / CFBP 6595 / CHA0</strain>
    </source>
</reference>
<reference evidence="8" key="2">
    <citation type="journal article" date="1989" name="EMBO J.">
        <title>Cyanide production by Pseudomonas fluorescens helps suppress black root rot of tobacco under gnotobiotic conditions.</title>
        <authorList>
            <person name="Voisard C."/>
            <person name="Keel C."/>
            <person name="Haas D."/>
            <person name="Defago G."/>
        </authorList>
    </citation>
    <scope>FUNCTION</scope>
    <scope>INDUCTION</scope>
    <source>
        <strain>DSM 19095 / LMG 27888 / CFBP 6595 / CHA0</strain>
    </source>
</reference>
<reference evidence="8" key="3">
    <citation type="journal article" date="2000" name="Microbiology">
        <title>Iron regulation of the hcnABC genes encoding hydrogen cyanide synthase depends on the anaerobic regulator ANR rather than on the global activator GacA in Pseudomonas fluorescens CHA0.</title>
        <authorList>
            <person name="Blumer C."/>
            <person name="Haas D."/>
        </authorList>
    </citation>
    <scope>INDUCTION</scope>
    <source>
        <strain>DSM 19095 / LMG 27888 / CFBP 6595 / CHA0</strain>
    </source>
</reference>
<keyword id="KW-1003">Cell membrane</keyword>
<keyword id="KW-0449">Lipoprotein</keyword>
<keyword id="KW-0472">Membrane</keyword>
<keyword id="KW-0560">Oxidoreductase</keyword>
<keyword id="KW-0564">Palmitate</keyword>
<keyword id="KW-0732">Signal</keyword>
<keyword id="KW-0812">Transmembrane</keyword>
<keyword id="KW-1133">Transmembrane helix</keyword>
<comment type="function">
    <text evidence="5 6">A three-component membrane-bound flavoenzyme that catalyzes the formation of hydrogen cyanide, a secondary metabolite, by transfer of electrons to a cyanide-resistant branch of the aerobic respiratory chain. Contributes to suppression of black root rot of tobacco.</text>
</comment>
<comment type="catalytic activity">
    <reaction evidence="1">
        <text>glycine + 2 A = hydrogen cyanide + 2 AH2 + CO2</text>
        <dbReference type="Rhea" id="RHEA:15821"/>
        <dbReference type="ChEBI" id="CHEBI:13193"/>
        <dbReference type="ChEBI" id="CHEBI:16526"/>
        <dbReference type="ChEBI" id="CHEBI:17499"/>
        <dbReference type="ChEBI" id="CHEBI:18407"/>
        <dbReference type="ChEBI" id="CHEBI:57305"/>
        <dbReference type="EC" id="1.4.99.5"/>
    </reaction>
</comment>
<comment type="subunit">
    <text evidence="1">Heterotrimer of HcnA, HcnB and HcnC.</text>
</comment>
<comment type="subcellular location">
    <subcellularLocation>
        <location evidence="1 3">Cell membrane</location>
    </subcellularLocation>
    <subcellularLocation>
        <location evidence="3">Cell membrane</location>
        <topology evidence="2">Single-pass membrane protein</topology>
    </subcellularLocation>
    <subcellularLocation>
        <location evidence="3">Cell membrane</location>
        <topology evidence="3">Lipid-anchor</topology>
    </subcellularLocation>
</comment>
<comment type="induction">
    <text evidence="4 5">Transcriptionally up-regulated by Anr in response to Fe(3+) in oxygen-limiting conditions. Stimulated by glycine.</text>
</comment>
<comment type="similarity">
    <text evidence="2">Belongs to the FAD-dependent glycerol-3-phosphate dehydrogenase family.</text>
</comment>